<comment type="function">
    <text evidence="2 3">Acts as one of several non-catalytic accessory components of the cytoplasmic dynein 1 complex that are thought to be involved in linking dynein to cargos and to adapter proteins that regulate dynein function. Cytoplasmic dynein 1 acts as a motor for the intracellular retrograde motility of vesicles and organelles along microtubules (By similarity). The intermediate chains mediate the binding of dynein to dynactin via its 150 kDa component (p150-glued) DCTN1 (By similarity). Involved in membrane-transport, such as Golgi apparatus, late endosomes and lysosomes (By similarity).</text>
</comment>
<comment type="subunit">
    <text evidence="1 2 3">Homodimer. The cytoplasmic dynein 1 complex consists of two catalytic heavy chains (HCs) and a number of non-catalytic subunits presented by intermediate chains (ICs), light intermediate chains (LICs) and light chains (LCs); the composition seems to vary in respect to the IC, LIC and LC composition. The heavy chain homodimer serves as a scaffold for the probable homodimeric assembly of the respective non-catalytic subunits. The ICs and LICs bind directly to the HC dimer and the LCs assemble on the IC dimer (By similarity). Interacts with DYNLT3 (By similarity). Interacts with DYNLT1 (By similarity). Interacts (dephosphorylated at Ser-90) with DCTN1 (By similarity). Interacts with BICD2. Interacts with SPEF2 (By similarity). Interacts with CFAP61 (By similarity).</text>
</comment>
<comment type="subcellular location">
    <subcellularLocation>
        <location evidence="2">Cytoplasm</location>
        <location evidence="2">Cytoskeleton</location>
    </subcellularLocation>
    <subcellularLocation>
        <location evidence="1">Cytoplasm</location>
    </subcellularLocation>
    <text evidence="1">Detected in the cytoplasm of pachytene spermatocytes. Localizes to the manchette in elongating spermatids.</text>
</comment>
<comment type="alternative products">
    <event type="alternative splicing"/>
    <isoform>
        <id>Q5NVM2-1</id>
        <name>1</name>
        <sequence type="displayed"/>
    </isoform>
    <isoform>
        <id>Q5NVM2-2</id>
        <name>2</name>
        <sequence type="described" ref="VSP_023012"/>
    </isoform>
    <isoform>
        <id>Q5NVM2-3</id>
        <name>3</name>
        <sequence type="described" ref="VSP_023013"/>
    </isoform>
</comment>
<comment type="PTM">
    <text evidence="3">The phosphorylation status of Ser-90 appears to be involved in dynactin-dependent target binding.</text>
</comment>
<comment type="PTM">
    <text evidence="1">Pyrophosphorylation by 5-diphosphoinositol pentakisphosphate (5-IP7) promotes interaction with DCTN1. Serine pyrophosphorylation is achieved by Mg(2+)-dependent, but enzyme independent transfer of a beta-phosphate from a inositol pyrophosphate to a pre-phosphorylated serine residue.</text>
</comment>
<comment type="similarity">
    <text evidence="6">Belongs to the dynein intermediate chain family.</text>
</comment>
<dbReference type="EMBL" id="CR857877">
    <property type="protein sequence ID" value="CAH90130.1"/>
    <property type="molecule type" value="mRNA"/>
</dbReference>
<dbReference type="EMBL" id="CR859506">
    <property type="protein sequence ID" value="CAH91675.1"/>
    <property type="molecule type" value="mRNA"/>
</dbReference>
<dbReference type="EMBL" id="CR926000">
    <property type="protein sequence ID" value="CAI29641.1"/>
    <property type="molecule type" value="mRNA"/>
</dbReference>
<dbReference type="RefSeq" id="NP_001127088.1">
    <molecule id="Q5NVM2-1"/>
    <property type="nucleotide sequence ID" value="NM_001133616.1"/>
</dbReference>
<dbReference type="RefSeq" id="NP_001128826.1">
    <property type="nucleotide sequence ID" value="NM_001135354.1"/>
</dbReference>
<dbReference type="SMR" id="Q5NVM2"/>
<dbReference type="FunCoup" id="Q5NVM2">
    <property type="interactions" value="2241"/>
</dbReference>
<dbReference type="STRING" id="9601.ENSPPYP00000014432"/>
<dbReference type="Ensembl" id="ENSPPYT00000015018.3">
    <molecule id="Q5NVM2-2"/>
    <property type="protein sequence ID" value="ENSPPYP00000014432.3"/>
    <property type="gene ID" value="ENSPPYG00000012930.3"/>
</dbReference>
<dbReference type="Ensembl" id="ENSPPYT00000035165.1">
    <molecule id="Q5NVM2-1"/>
    <property type="protein sequence ID" value="ENSPPYP00000028264.1"/>
    <property type="gene ID" value="ENSPPYG00000012930.3"/>
</dbReference>
<dbReference type="GeneID" id="100174119"/>
<dbReference type="KEGG" id="pon:100174119"/>
<dbReference type="CTD" id="1781"/>
<dbReference type="eggNOG" id="KOG1587">
    <property type="taxonomic scope" value="Eukaryota"/>
</dbReference>
<dbReference type="GeneTree" id="ENSGT00940000155442"/>
<dbReference type="HOGENOM" id="CLU_012999_1_1_1"/>
<dbReference type="InParanoid" id="Q5NVM2"/>
<dbReference type="OMA" id="MHDRPEY"/>
<dbReference type="OrthoDB" id="4189at2759"/>
<dbReference type="TreeFam" id="TF300553"/>
<dbReference type="Proteomes" id="UP000001595">
    <property type="component" value="Chromosome 2B"/>
</dbReference>
<dbReference type="GO" id="GO:0005813">
    <property type="term" value="C:centrosome"/>
    <property type="evidence" value="ECO:0007669"/>
    <property type="project" value="Ensembl"/>
</dbReference>
<dbReference type="GO" id="GO:0005737">
    <property type="term" value="C:cytoplasm"/>
    <property type="evidence" value="ECO:0007669"/>
    <property type="project" value="UniProtKB-SubCell"/>
</dbReference>
<dbReference type="GO" id="GO:0005868">
    <property type="term" value="C:cytoplasmic dynein complex"/>
    <property type="evidence" value="ECO:0007669"/>
    <property type="project" value="InterPro"/>
</dbReference>
<dbReference type="GO" id="GO:0005874">
    <property type="term" value="C:microtubule"/>
    <property type="evidence" value="ECO:0007669"/>
    <property type="project" value="UniProtKB-KW"/>
</dbReference>
<dbReference type="GO" id="GO:0031982">
    <property type="term" value="C:vesicle"/>
    <property type="evidence" value="ECO:0000250"/>
    <property type="project" value="UniProtKB"/>
</dbReference>
<dbReference type="GO" id="GO:0045504">
    <property type="term" value="F:dynein heavy chain binding"/>
    <property type="evidence" value="ECO:0007669"/>
    <property type="project" value="TreeGrafter"/>
</dbReference>
<dbReference type="GO" id="GO:0045503">
    <property type="term" value="F:dynein light chain binding"/>
    <property type="evidence" value="ECO:0007669"/>
    <property type="project" value="TreeGrafter"/>
</dbReference>
<dbReference type="GO" id="GO:0010970">
    <property type="term" value="P:transport along microtubule"/>
    <property type="evidence" value="ECO:0007669"/>
    <property type="project" value="TreeGrafter"/>
</dbReference>
<dbReference type="FunFam" id="2.130.10.10:FF:000095">
    <property type="entry name" value="Cytoplasmic dynein 1 intermediate chain 2"/>
    <property type="match status" value="1"/>
</dbReference>
<dbReference type="FunFam" id="2.130.10.10:FF:000026">
    <property type="entry name" value="cytoplasmic dynein 1 intermediate chain 2 isoform X2"/>
    <property type="match status" value="1"/>
</dbReference>
<dbReference type="Gene3D" id="2.130.10.10">
    <property type="entry name" value="YVTN repeat-like/Quinoprotein amine dehydrogenase"/>
    <property type="match status" value="2"/>
</dbReference>
<dbReference type="InterPro" id="IPR025956">
    <property type="entry name" value="DYNC1I1/DYNC1I2"/>
</dbReference>
<dbReference type="InterPro" id="IPR050687">
    <property type="entry name" value="Dynein_IC"/>
</dbReference>
<dbReference type="InterPro" id="IPR015943">
    <property type="entry name" value="WD40/YVTN_repeat-like_dom_sf"/>
</dbReference>
<dbReference type="InterPro" id="IPR036322">
    <property type="entry name" value="WD40_repeat_dom_sf"/>
</dbReference>
<dbReference type="InterPro" id="IPR001680">
    <property type="entry name" value="WD40_rpt"/>
</dbReference>
<dbReference type="PANTHER" id="PTHR12442:SF37">
    <property type="entry name" value="CYTOPLASMIC DYNEIN 1 INTERMEDIATE CHAIN 2"/>
    <property type="match status" value="1"/>
</dbReference>
<dbReference type="PANTHER" id="PTHR12442">
    <property type="entry name" value="DYNEIN INTERMEDIATE CHAIN"/>
    <property type="match status" value="1"/>
</dbReference>
<dbReference type="Pfam" id="PF11540">
    <property type="entry name" value="Dynein_IC2"/>
    <property type="match status" value="1"/>
</dbReference>
<dbReference type="Pfam" id="PF00400">
    <property type="entry name" value="WD40"/>
    <property type="match status" value="1"/>
</dbReference>
<dbReference type="SMART" id="SM00320">
    <property type="entry name" value="WD40"/>
    <property type="match status" value="5"/>
</dbReference>
<dbReference type="SUPFAM" id="SSF50978">
    <property type="entry name" value="WD40 repeat-like"/>
    <property type="match status" value="1"/>
</dbReference>
<dbReference type="PROSITE" id="PS50294">
    <property type="entry name" value="WD_REPEATS_REGION"/>
    <property type="match status" value="1"/>
</dbReference>
<gene>
    <name type="primary">DYNC1I2</name>
</gene>
<reference key="1">
    <citation type="submission" date="2004-11" db="EMBL/GenBank/DDBJ databases">
        <authorList>
            <consortium name="The German cDNA consortium"/>
        </authorList>
    </citation>
    <scope>NUCLEOTIDE SEQUENCE [LARGE SCALE MRNA] (ISOFORMS 1; 2 AND 3)</scope>
    <source>
        <tissue>Brain cortex</tissue>
    </source>
</reference>
<feature type="initiator methionine" description="Removed" evidence="2">
    <location>
        <position position="1"/>
    </location>
</feature>
<feature type="chain" id="PRO_0000277463" description="Cytoplasmic dynein 1 intermediate chain 2">
    <location>
        <begin position="2"/>
        <end position="638"/>
    </location>
</feature>
<feature type="repeat" description="WD 1">
    <location>
        <begin position="277"/>
        <end position="326"/>
    </location>
</feature>
<feature type="repeat" description="WD 2">
    <location>
        <begin position="330"/>
        <end position="370"/>
    </location>
</feature>
<feature type="repeat" description="WD 3">
    <location>
        <begin position="379"/>
        <end position="420"/>
    </location>
</feature>
<feature type="repeat" description="WD 4">
    <location>
        <begin position="429"/>
        <end position="469"/>
    </location>
</feature>
<feature type="repeat" description="WD 5">
    <location>
        <begin position="474"/>
        <end position="519"/>
    </location>
</feature>
<feature type="repeat" description="WD 6">
    <location>
        <begin position="522"/>
        <end position="562"/>
    </location>
</feature>
<feature type="repeat" description="WD 7">
    <location>
        <begin position="568"/>
        <end position="607"/>
    </location>
</feature>
<feature type="region of interest" description="Disordered" evidence="4">
    <location>
        <begin position="1"/>
        <end position="135"/>
    </location>
</feature>
<feature type="region of interest" description="Disordered" evidence="4">
    <location>
        <begin position="155"/>
        <end position="214"/>
    </location>
</feature>
<feature type="compositionally biased region" description="Basic and acidic residues" evidence="4">
    <location>
        <begin position="1"/>
        <end position="13"/>
    </location>
</feature>
<feature type="compositionally biased region" description="Basic and acidic residues" evidence="4">
    <location>
        <begin position="20"/>
        <end position="43"/>
    </location>
</feature>
<feature type="compositionally biased region" description="Low complexity" evidence="4">
    <location>
        <begin position="88"/>
        <end position="97"/>
    </location>
</feature>
<feature type="compositionally biased region" description="Basic and acidic residues" evidence="4">
    <location>
        <begin position="190"/>
        <end position="214"/>
    </location>
</feature>
<feature type="modified residue" description="N-acetylserine" evidence="2">
    <location>
        <position position="2"/>
    </location>
</feature>
<feature type="modified residue" description="Diphosphoserine" evidence="1">
    <location>
        <position position="51"/>
    </location>
</feature>
<feature type="modified residue" description="Phosphoserine" evidence="2">
    <location>
        <position position="51"/>
    </location>
</feature>
<feature type="modified residue" description="Phosphoserine" evidence="3">
    <location>
        <position position="90"/>
    </location>
</feature>
<feature type="modified residue" description="Phosphothreonine" evidence="2">
    <location>
        <position position="95"/>
    </location>
</feature>
<feature type="modified residue" description="Phosphoserine" evidence="2">
    <location>
        <position position="97"/>
    </location>
</feature>
<feature type="modified residue" description="Phosphoserine" evidence="2">
    <location>
        <position position="101"/>
    </location>
</feature>
<feature type="modified residue" description="Phosphoserine" evidence="2">
    <location>
        <position position="104"/>
    </location>
</feature>
<feature type="splice variant" id="VSP_023012" description="In isoform 2." evidence="5">
    <location>
        <begin position="77"/>
        <end position="82"/>
    </location>
</feature>
<feature type="splice variant" id="VSP_023013" description="In isoform 3." evidence="5">
    <location>
        <position position="602"/>
    </location>
</feature>
<feature type="sequence conflict" description="In Ref. 1; CAH90130." evidence="6" ref="1">
    <original>K</original>
    <variation>E</variation>
    <location>
        <position position="41"/>
    </location>
</feature>
<feature type="sequence conflict" description="In Ref. 1; CAH91675." evidence="6" ref="1">
    <original>N</original>
    <variation>S</variation>
    <location>
        <position position="300"/>
    </location>
</feature>
<feature type="sequence conflict" description="In Ref. 1; CAH90130." evidence="6" ref="1">
    <original>H</original>
    <variation>Y</variation>
    <location>
        <position position="580"/>
    </location>
</feature>
<keyword id="KW-0007">Acetylation</keyword>
<keyword id="KW-0025">Alternative splicing</keyword>
<keyword id="KW-0963">Cytoplasm</keyword>
<keyword id="KW-0206">Cytoskeleton</keyword>
<keyword id="KW-0243">Dynein</keyword>
<keyword id="KW-0493">Microtubule</keyword>
<keyword id="KW-0505">Motor protein</keyword>
<keyword id="KW-0597">Phosphoprotein</keyword>
<keyword id="KW-1185">Reference proteome</keyword>
<keyword id="KW-0677">Repeat</keyword>
<keyword id="KW-0813">Transport</keyword>
<keyword id="KW-0853">WD repeat</keyword>
<accession>Q5NVM2</accession>
<accession>Q5R985</accession>
<accession>Q5RDM7</accession>
<proteinExistence type="evidence at transcript level"/>
<protein>
    <recommendedName>
        <fullName>Cytoplasmic dynein 1 intermediate chain 2</fullName>
    </recommendedName>
    <alternativeName>
        <fullName>Cytoplasmic dynein intermediate chain 2</fullName>
    </alternativeName>
    <alternativeName>
        <fullName>Dynein intermediate chain 2, cytosolic</fullName>
        <shortName>DH IC-2</shortName>
    </alternativeName>
</protein>
<evidence type="ECO:0000250" key="1">
    <source>
        <dbReference type="UniProtKB" id="O88487"/>
    </source>
</evidence>
<evidence type="ECO:0000250" key="2">
    <source>
        <dbReference type="UniProtKB" id="Q13409"/>
    </source>
</evidence>
<evidence type="ECO:0000250" key="3">
    <source>
        <dbReference type="UniProtKB" id="Q62871"/>
    </source>
</evidence>
<evidence type="ECO:0000256" key="4">
    <source>
        <dbReference type="SAM" id="MobiDB-lite"/>
    </source>
</evidence>
<evidence type="ECO:0000303" key="5">
    <source ref="1"/>
</evidence>
<evidence type="ECO:0000305" key="6"/>
<organism>
    <name type="scientific">Pongo abelii</name>
    <name type="common">Sumatran orangutan</name>
    <name type="synonym">Pongo pygmaeus abelii</name>
    <dbReference type="NCBI Taxonomy" id="9601"/>
    <lineage>
        <taxon>Eukaryota</taxon>
        <taxon>Metazoa</taxon>
        <taxon>Chordata</taxon>
        <taxon>Craniata</taxon>
        <taxon>Vertebrata</taxon>
        <taxon>Euteleostomi</taxon>
        <taxon>Mammalia</taxon>
        <taxon>Eutheria</taxon>
        <taxon>Euarchontoglires</taxon>
        <taxon>Primates</taxon>
        <taxon>Haplorrhini</taxon>
        <taxon>Catarrhini</taxon>
        <taxon>Hominidae</taxon>
        <taxon>Pongo</taxon>
    </lineage>
</organism>
<sequence>MSDKSELKAELERKKQRLAQIREEKKRKEEERKKKETDQKKEAVAPVQEESDLEKKRREAEALLQSMGLTPESPIVFSEYWVPPPMSPSSKSVSTPSEAGSQDSGDGAVGSRTLHWDTDPSVLQLHSDSDLGRGPIKLGMAKITQVDFPPREIVTYTKETQTPVMAQPKEDEEEDDDVVAPKPPIEPEEEKTLKKDEENDSKAPPHELTEEEKQQILHSEEFLSFFDHSTRIVERALSEQINIFFDYSGRDLEDKEGEIQAGAKLSLNRQFFDERWSKHRVVSCLDWSSQYPELLVASYNNNEDAPHEPDGVALVWNMKYKKTTPEYVFHCQSAVMSATFAKFHPNLVVGGTYSGQIVLWDNRSNKRTPVQRTPLSAAAHTHPVYCVNVVGTQNAHNLISISTDGKICSWSLDMLSHPQDSMELVHKQSKAVAVTSMSFPVGDVNNFVVGSEEGSVYTACRHGSKAGISEMFEGHQGPITGIHCHAAVGAVDFSHLFVTSSFDWTVKLWTTKNNKPLYSFEDNADYVYDVMWSPTHPALFACVDGMGRLDLWNLNNDTEVPTASISVEGNPALNRVRWTHSGREIAVGDSEGQIVIYDVGEQIAVPRNDEWARFGRTLAEINANRADAEEEAATRIPA</sequence>
<name>DC1I2_PONAB</name>